<accession>Q9V2Q9</accession>
<accession>G8ZFJ3</accession>
<protein>
    <recommendedName>
        <fullName evidence="1">Phosphoenolpyruvate carboxylase</fullName>
        <shortName evidence="1">PEPC</shortName>
        <shortName evidence="1">PEPCase</shortName>
        <ecNumber evidence="1">4.1.1.31</ecNumber>
    </recommendedName>
</protein>
<comment type="function">
    <text evidence="1">Catalyzes the irreversible beta-carboxylation of phosphoenolpyruvate (PEP) to form oxaloacetate (OAA), a four-carbon dicarboxylic acid source for the tricarboxylic acid cycle.</text>
</comment>
<comment type="catalytic activity">
    <reaction evidence="1">
        <text>oxaloacetate + phosphate = phosphoenolpyruvate + hydrogencarbonate</text>
        <dbReference type="Rhea" id="RHEA:28370"/>
        <dbReference type="ChEBI" id="CHEBI:16452"/>
        <dbReference type="ChEBI" id="CHEBI:17544"/>
        <dbReference type="ChEBI" id="CHEBI:43474"/>
        <dbReference type="ChEBI" id="CHEBI:58702"/>
        <dbReference type="EC" id="4.1.1.31"/>
    </reaction>
</comment>
<comment type="cofactor">
    <cofactor evidence="1">
        <name>Mg(2+)</name>
        <dbReference type="ChEBI" id="CHEBI:18420"/>
    </cofactor>
</comment>
<comment type="subunit">
    <text evidence="1">Homotetramer.</text>
</comment>
<comment type="similarity">
    <text evidence="1">Belongs to the PEPCase type 2 family.</text>
</comment>
<dbReference type="EC" id="4.1.1.31" evidence="1"/>
<dbReference type="EMBL" id="AJ248283">
    <property type="protein sequence ID" value="CAB48939.1"/>
    <property type="molecule type" value="Genomic_DNA"/>
</dbReference>
<dbReference type="EMBL" id="HE613800">
    <property type="protein sequence ID" value="CCE69384.1"/>
    <property type="molecule type" value="Genomic_DNA"/>
</dbReference>
<dbReference type="PIR" id="D75186">
    <property type="entry name" value="D75186"/>
</dbReference>
<dbReference type="RefSeq" id="WP_010867139.1">
    <property type="nucleotide sequence ID" value="NC_000868.1"/>
</dbReference>
<dbReference type="SMR" id="Q9V2Q9"/>
<dbReference type="STRING" id="272844.PAB2342"/>
<dbReference type="KEGG" id="pab:PAB2342"/>
<dbReference type="PATRIC" id="fig|272844.11.peg.18"/>
<dbReference type="eggNOG" id="arCOG04435">
    <property type="taxonomic scope" value="Archaea"/>
</dbReference>
<dbReference type="HOGENOM" id="CLU_517433_0_0_2"/>
<dbReference type="OrthoDB" id="85849at2157"/>
<dbReference type="PhylomeDB" id="Q9V2Q9"/>
<dbReference type="Proteomes" id="UP000000810">
    <property type="component" value="Chromosome"/>
</dbReference>
<dbReference type="Proteomes" id="UP000009139">
    <property type="component" value="Chromosome"/>
</dbReference>
<dbReference type="GO" id="GO:0000287">
    <property type="term" value="F:magnesium ion binding"/>
    <property type="evidence" value="ECO:0007669"/>
    <property type="project" value="UniProtKB-UniRule"/>
</dbReference>
<dbReference type="GO" id="GO:0008964">
    <property type="term" value="F:phosphoenolpyruvate carboxylase activity"/>
    <property type="evidence" value="ECO:0007669"/>
    <property type="project" value="UniProtKB-UniRule"/>
</dbReference>
<dbReference type="GO" id="GO:0015977">
    <property type="term" value="P:carbon fixation"/>
    <property type="evidence" value="ECO:0007669"/>
    <property type="project" value="UniProtKB-UniRule"/>
</dbReference>
<dbReference type="GO" id="GO:0006107">
    <property type="term" value="P:oxaloacetate metabolic process"/>
    <property type="evidence" value="ECO:0007669"/>
    <property type="project" value="UniProtKB-UniRule"/>
</dbReference>
<dbReference type="GO" id="GO:0006099">
    <property type="term" value="P:tricarboxylic acid cycle"/>
    <property type="evidence" value="ECO:0007669"/>
    <property type="project" value="InterPro"/>
</dbReference>
<dbReference type="HAMAP" id="MF_01904">
    <property type="entry name" value="PEPcase_type2"/>
    <property type="match status" value="1"/>
</dbReference>
<dbReference type="InterPro" id="IPR007566">
    <property type="entry name" value="PEP_COase_arc-type"/>
</dbReference>
<dbReference type="InterPro" id="IPR015813">
    <property type="entry name" value="Pyrv/PenolPyrv_kinase-like_dom"/>
</dbReference>
<dbReference type="NCBIfam" id="TIGR02751">
    <property type="entry name" value="PEPCase_arch"/>
    <property type="match status" value="1"/>
</dbReference>
<dbReference type="Pfam" id="PF14010">
    <property type="entry name" value="PEPcase_2"/>
    <property type="match status" value="1"/>
</dbReference>
<dbReference type="PIRSF" id="PIRSF006677">
    <property type="entry name" value="UCP006677"/>
    <property type="match status" value="1"/>
</dbReference>
<dbReference type="SUPFAM" id="SSF51621">
    <property type="entry name" value="Phosphoenolpyruvate/pyruvate domain"/>
    <property type="match status" value="1"/>
</dbReference>
<sequence>MIPRIMSTQHPDNYSIPFFANSPVLGGEDEITEAFYAFNVLGADEQMWDFEGKEVDEFVVKKLLERYPSFFRKVILGKDVRLTPRVPNPTVEKAEAKLLLETLQGITRAADYARVFYGEDIAPIFEVILPMTTSLAEIERVHELYRKVVNLADERIYDTTVKEWIGEFYPKEIGIIPLFETKVALLKSAKIIGEYLERREPEYQRVFLARSDPAMNYGLISAVTYVKNALQEIWELEEETSIPIYPIVGVGGPPFRGGMRPDNVDNVLSEYPSVQTYTVQSSFKFDYPTKEVVKAVEKVKSTKRKEPYSLEVPDFITLYEVEYQRQVKILAPHIRRLATRIPDRRKRKLHIGLFGYSRNVGGLSLPRAIKFTASLYSIGVPPELLGLNALTDRQLDVVSEYYVNIYEDLEFAMRFFSFRVAEKAGLKELVERIKEFKPEIEEEYVAEAEIVFRGEGDIIKLAQMRGFLG</sequence>
<gene>
    <name evidence="1" type="primary">ppcA</name>
    <name type="ordered locus">PYRAB00160</name>
    <name type="ORF">PAB2342</name>
</gene>
<organism>
    <name type="scientific">Pyrococcus abyssi (strain GE5 / Orsay)</name>
    <dbReference type="NCBI Taxonomy" id="272844"/>
    <lineage>
        <taxon>Archaea</taxon>
        <taxon>Methanobacteriati</taxon>
        <taxon>Methanobacteriota</taxon>
        <taxon>Thermococci</taxon>
        <taxon>Thermococcales</taxon>
        <taxon>Thermococcaceae</taxon>
        <taxon>Pyrococcus</taxon>
    </lineage>
</organism>
<name>CAPPA_PYRAB</name>
<feature type="chain" id="PRO_0000309611" description="Phosphoenolpyruvate carboxylase">
    <location>
        <begin position="1"/>
        <end position="469"/>
    </location>
</feature>
<keyword id="KW-0120">Carbon dioxide fixation</keyword>
<keyword id="KW-0456">Lyase</keyword>
<keyword id="KW-0460">Magnesium</keyword>
<proteinExistence type="inferred from homology"/>
<reference key="1">
    <citation type="journal article" date="2003" name="Mol. Microbiol.">
        <title>An integrated analysis of the genome of the hyperthermophilic archaeon Pyrococcus abyssi.</title>
        <authorList>
            <person name="Cohen G.N."/>
            <person name="Barbe V."/>
            <person name="Flament D."/>
            <person name="Galperin M."/>
            <person name="Heilig R."/>
            <person name="Lecompte O."/>
            <person name="Poch O."/>
            <person name="Prieur D."/>
            <person name="Querellou J."/>
            <person name="Ripp R."/>
            <person name="Thierry J.-C."/>
            <person name="Van der Oost J."/>
            <person name="Weissenbach J."/>
            <person name="Zivanovic Y."/>
            <person name="Forterre P."/>
        </authorList>
    </citation>
    <scope>NUCLEOTIDE SEQUENCE [LARGE SCALE GENOMIC DNA]</scope>
    <source>
        <strain>GE5 / Orsay</strain>
    </source>
</reference>
<reference key="2">
    <citation type="journal article" date="2012" name="Curr. Microbiol.">
        <title>Re-annotation of two hyperthermophilic archaea Pyrococcus abyssi GE5 and Pyrococcus furiosus DSM 3638.</title>
        <authorList>
            <person name="Gao J."/>
            <person name="Wang J."/>
        </authorList>
    </citation>
    <scope>GENOME REANNOTATION</scope>
    <source>
        <strain>GE5 / Orsay</strain>
    </source>
</reference>
<evidence type="ECO:0000255" key="1">
    <source>
        <dbReference type="HAMAP-Rule" id="MF_01904"/>
    </source>
</evidence>